<accession>Q9C448</accession>
<keyword id="KW-0460">Magnesium</keyword>
<keyword id="KW-0479">Metal-binding</keyword>
<keyword id="KW-0808">Transferase</keyword>
<name>PAXC_PENPX</name>
<evidence type="ECO:0000250" key="1">
    <source>
        <dbReference type="UniProtKB" id="Q12051"/>
    </source>
</evidence>
<evidence type="ECO:0000269" key="2">
    <source>
    </source>
</evidence>
<evidence type="ECO:0000269" key="3">
    <source>
    </source>
</evidence>
<evidence type="ECO:0000269" key="4">
    <source>
    </source>
</evidence>
<evidence type="ECO:0000303" key="5">
    <source>
    </source>
</evidence>
<evidence type="ECO:0000305" key="6"/>
<evidence type="ECO:0000305" key="7">
    <source>
    </source>
</evidence>
<evidence type="ECO:0000305" key="8">
    <source>
    </source>
</evidence>
<gene>
    <name evidence="5" type="primary">paxC</name>
</gene>
<protein>
    <recommendedName>
        <fullName evidence="5">Prenyl transferase paxC</fullName>
        <ecNumber evidence="6">2.5.1.-</ecNumber>
    </recommendedName>
    <alternativeName>
        <fullName evidence="5">Paxilline synthesis protein C</fullName>
    </alternativeName>
</protein>
<proteinExistence type="inferred from homology"/>
<reference key="1">
    <citation type="journal article" date="2001" name="Mol. Microbiol.">
        <title>Molecular cloning and genetic analysis of an indole-diterpene gene cluster from Penicillium paxilli.</title>
        <authorList>
            <person name="Young C."/>
            <person name="McMillan L."/>
            <person name="Telfer E."/>
            <person name="Scott B."/>
        </authorList>
    </citation>
    <scope>NUCLEOTIDE SEQUENCE [GENOMIC DNA]</scope>
    <scope>FUNCTION</scope>
    <source>
        <strain>PN2013</strain>
    </source>
</reference>
<reference key="2">
    <citation type="journal article" date="2013" name="Toxins">
        <title>Deletion and gene expression analyses define the paxilline biosynthetic gene cluster in Penicillium paxilli.</title>
        <authorList>
            <person name="Scott B."/>
            <person name="Young C.A."/>
            <person name="Saikia S."/>
            <person name="McMillan L.K."/>
            <person name="Monahan B.J."/>
            <person name="Koulman A."/>
            <person name="Astin J."/>
            <person name="Eaton C.J."/>
            <person name="Bryant A."/>
            <person name="Wrenn R.E."/>
            <person name="Finch S.C."/>
            <person name="Tapper B.A."/>
            <person name="Parker E.J."/>
            <person name="Jameson G.B."/>
        </authorList>
    </citation>
    <scope>NUCLEOTIDE SEQUENCE [GENOMIC DNA]</scope>
    <scope>FUNCTION</scope>
    <scope>DISRUPTION PHENOTYPE</scope>
    <source>
        <strain>PN2013</strain>
    </source>
</reference>
<reference key="3">
    <citation type="journal article" date="2006" name="FEBS Lett.">
        <title>Four gene products are required for the fungal synthesis of the indole-diterpene, paspaline.</title>
        <authorList>
            <person name="Saikia S."/>
            <person name="Parker E.J."/>
            <person name="Koulman A."/>
            <person name="Scott B."/>
        </authorList>
    </citation>
    <scope>FUNCTION</scope>
</reference>
<sequence length="317" mass="35924">MGVAGSGVLYFLFNNVPSPRFWLKKTQLIGTENPEGITGYECPYEYLRKSYGKHHWAAFVDKLSPNLQNEDPAKYRMVLETMDVIHLCLMMVDDISDGSEYRKGKPAAHKIYGAPETANRAYYRVTQILAQTATEFPRLSPWLMTDLRDILEGQDMSLVWRRDGVNGFPGTASERTAAYKRMVLLKTGGLFRLLGHLTLENNSMDEAFSTLGWHSQLQNDCKNVYSSEYAKMKGVVAEDLLNREMTYPIVLALDASGGHWVEAALKSPSRRNVGNALKIIQCDYVRDVCMAELARSGAPVKEWLKLWKREEKLDLKA</sequence>
<organism>
    <name type="scientific">Penicillium paxilli</name>
    <dbReference type="NCBI Taxonomy" id="70109"/>
    <lineage>
        <taxon>Eukaryota</taxon>
        <taxon>Fungi</taxon>
        <taxon>Dikarya</taxon>
        <taxon>Ascomycota</taxon>
        <taxon>Pezizomycotina</taxon>
        <taxon>Eurotiomycetes</taxon>
        <taxon>Eurotiomycetidae</taxon>
        <taxon>Eurotiales</taxon>
        <taxon>Aspergillaceae</taxon>
        <taxon>Penicillium</taxon>
    </lineage>
</organism>
<feature type="chain" id="PRO_0000436117" description="Prenyl transferase paxC">
    <location>
        <begin position="1"/>
        <end position="317"/>
    </location>
</feature>
<feature type="binding site" evidence="1">
    <location>
        <position position="53"/>
    </location>
    <ligand>
        <name>substrate</name>
    </ligand>
</feature>
<feature type="binding site" evidence="1">
    <location>
        <position position="86"/>
    </location>
    <ligand>
        <name>substrate</name>
    </ligand>
</feature>
<feature type="binding site" evidence="1">
    <location>
        <position position="93"/>
    </location>
    <ligand>
        <name>Mg(2+)</name>
        <dbReference type="ChEBI" id="CHEBI:18420"/>
        <label>1</label>
    </ligand>
</feature>
<feature type="binding site" evidence="1">
    <location>
        <position position="93"/>
    </location>
    <ligand>
        <name>Mg(2+)</name>
        <dbReference type="ChEBI" id="CHEBI:18420"/>
        <label>2</label>
    </ligand>
</feature>
<feature type="binding site" evidence="1">
    <location>
        <position position="97"/>
    </location>
    <ligand>
        <name>Mg(2+)</name>
        <dbReference type="ChEBI" id="CHEBI:18420"/>
        <label>1</label>
    </ligand>
</feature>
<feature type="binding site" evidence="1">
    <location>
        <position position="97"/>
    </location>
    <ligand>
        <name>Mg(2+)</name>
        <dbReference type="ChEBI" id="CHEBI:18420"/>
        <label>2</label>
    </ligand>
</feature>
<feature type="binding site" evidence="1">
    <location>
        <position position="102"/>
    </location>
    <ligand>
        <name>substrate</name>
    </ligand>
</feature>
<feature type="binding site" evidence="1">
    <location>
        <position position="186"/>
    </location>
    <ligand>
        <name>substrate</name>
    </ligand>
</feature>
<feature type="binding site" evidence="1">
    <location>
        <position position="187"/>
    </location>
    <ligand>
        <name>substrate</name>
    </ligand>
</feature>
<feature type="binding site" evidence="1">
    <location>
        <position position="216"/>
    </location>
    <ligand>
        <name>substrate</name>
    </ligand>
</feature>
<feature type="binding site" evidence="1">
    <location>
        <position position="223"/>
    </location>
    <ligand>
        <name>substrate</name>
    </ligand>
</feature>
<feature type="binding site" evidence="1">
    <location>
        <position position="233"/>
    </location>
    <ligand>
        <name>substrate</name>
    </ligand>
</feature>
<dbReference type="EC" id="2.5.1.-" evidence="6"/>
<dbReference type="EMBL" id="HM171111">
    <property type="protein sequence ID" value="AAK11529.1"/>
    <property type="molecule type" value="Genomic_DNA"/>
</dbReference>
<dbReference type="SMR" id="Q9C448"/>
<dbReference type="BioCyc" id="MetaCyc:MONOMER-18635"/>
<dbReference type="GO" id="GO:0046872">
    <property type="term" value="F:metal ion binding"/>
    <property type="evidence" value="ECO:0007669"/>
    <property type="project" value="UniProtKB-KW"/>
</dbReference>
<dbReference type="GO" id="GO:0004659">
    <property type="term" value="F:prenyltransferase activity"/>
    <property type="evidence" value="ECO:0007669"/>
    <property type="project" value="InterPro"/>
</dbReference>
<dbReference type="GO" id="GO:0140873">
    <property type="term" value="P:paxilline biosynthetic process"/>
    <property type="evidence" value="ECO:0000315"/>
    <property type="project" value="GO_Central"/>
</dbReference>
<dbReference type="CDD" id="cd00867">
    <property type="entry name" value="Trans_IPPS"/>
    <property type="match status" value="1"/>
</dbReference>
<dbReference type="Gene3D" id="1.10.600.10">
    <property type="entry name" value="Farnesyl Diphosphate Synthase"/>
    <property type="match status" value="1"/>
</dbReference>
<dbReference type="InterPro" id="IPR008949">
    <property type="entry name" value="Isoprenoid_synthase_dom_sf"/>
</dbReference>
<dbReference type="InterPro" id="IPR000092">
    <property type="entry name" value="Polyprenyl_synt"/>
</dbReference>
<dbReference type="PANTHER" id="PTHR12001">
    <property type="entry name" value="GERANYLGERANYL PYROPHOSPHATE SYNTHASE"/>
    <property type="match status" value="1"/>
</dbReference>
<dbReference type="PANTHER" id="PTHR12001:SF44">
    <property type="entry name" value="GERANYLGERANYL PYROPHOSPHATE SYNTHASE"/>
    <property type="match status" value="1"/>
</dbReference>
<dbReference type="Pfam" id="PF00348">
    <property type="entry name" value="polyprenyl_synt"/>
    <property type="match status" value="1"/>
</dbReference>
<dbReference type="SUPFAM" id="SSF48576">
    <property type="entry name" value="Terpenoid synthases"/>
    <property type="match status" value="1"/>
</dbReference>
<comment type="function">
    <text evidence="2 3 4">Prenyl transferase; part of the gene cluster that mediates the biosynthesis of paxalline, a mycotoxin that acts as an inhibitor of mammalian maxi-K channels (PubMed:11169115, PubMed:16494875, PubMed:23949005). PaxG, the geranylgeranyl diphosphate (GGPP) synthase is proposed to catalyze the first step in paxilline biosynthesis (PubMed:16494875, PubMed:23949005). Condensation of indole-3-glycerol phosphate with GGPP by paxC then forms 3-geranylgeranylindole (3-GGI), followed by epoxidation and cyclization of this intermediate (by paxM and paxB) to form paspaline (PubMed:16494875, PubMed:23949005). Paspaline is subsequently converted to 13-desoxypaxilline by paxP, the latter being then converted to paxilline by paxQ (PubMed:23949005). Finally paxilline can be mono- and di-prenylated by paxD (PubMed:23949005).</text>
</comment>
<comment type="pathway">
    <text evidence="3 7 8">Secondary metabolite biosynthesis.</text>
</comment>
<comment type="disruption phenotype">
    <text evidence="4">Impairs the production of paxilline (PubMed:23949005).</text>
</comment>
<comment type="similarity">
    <text evidence="6">Belongs to the FPP/GGPP synthase family.</text>
</comment>